<organism>
    <name type="scientific">Escherichia coli O81 (strain ED1a)</name>
    <dbReference type="NCBI Taxonomy" id="585397"/>
    <lineage>
        <taxon>Bacteria</taxon>
        <taxon>Pseudomonadati</taxon>
        <taxon>Pseudomonadota</taxon>
        <taxon>Gammaproteobacteria</taxon>
        <taxon>Enterobacterales</taxon>
        <taxon>Enterobacteriaceae</taxon>
        <taxon>Escherichia</taxon>
    </lineage>
</organism>
<keyword id="KW-0998">Cell outer membrane</keyword>
<keyword id="KW-0961">Cell wall biogenesis/degradation</keyword>
<keyword id="KW-0449">Lipoprotein</keyword>
<keyword id="KW-0456">Lyase</keyword>
<keyword id="KW-0472">Membrane</keyword>
<keyword id="KW-0564">Palmitate</keyword>
<keyword id="KW-0732">Signal</keyword>
<reference key="1">
    <citation type="journal article" date="2009" name="PLoS Genet.">
        <title>Organised genome dynamics in the Escherichia coli species results in highly diverse adaptive paths.</title>
        <authorList>
            <person name="Touchon M."/>
            <person name="Hoede C."/>
            <person name="Tenaillon O."/>
            <person name="Barbe V."/>
            <person name="Baeriswyl S."/>
            <person name="Bidet P."/>
            <person name="Bingen E."/>
            <person name="Bonacorsi S."/>
            <person name="Bouchier C."/>
            <person name="Bouvet O."/>
            <person name="Calteau A."/>
            <person name="Chiapello H."/>
            <person name="Clermont O."/>
            <person name="Cruveiller S."/>
            <person name="Danchin A."/>
            <person name="Diard M."/>
            <person name="Dossat C."/>
            <person name="Karoui M.E."/>
            <person name="Frapy E."/>
            <person name="Garry L."/>
            <person name="Ghigo J.M."/>
            <person name="Gilles A.M."/>
            <person name="Johnson J."/>
            <person name="Le Bouguenec C."/>
            <person name="Lescat M."/>
            <person name="Mangenot S."/>
            <person name="Martinez-Jehanne V."/>
            <person name="Matic I."/>
            <person name="Nassif X."/>
            <person name="Oztas S."/>
            <person name="Petit M.A."/>
            <person name="Pichon C."/>
            <person name="Rouy Z."/>
            <person name="Ruf C.S."/>
            <person name="Schneider D."/>
            <person name="Tourret J."/>
            <person name="Vacherie B."/>
            <person name="Vallenet D."/>
            <person name="Medigue C."/>
            <person name="Rocha E.P.C."/>
            <person name="Denamur E."/>
        </authorList>
    </citation>
    <scope>NUCLEOTIDE SEQUENCE [LARGE SCALE GENOMIC DNA]</scope>
    <source>
        <strain>ED1a</strain>
    </source>
</reference>
<name>MLTC_ECO81</name>
<dbReference type="EC" id="4.2.2.n1" evidence="1"/>
<dbReference type="EMBL" id="CU928162">
    <property type="protein sequence ID" value="CAR09435.1"/>
    <property type="molecule type" value="Genomic_DNA"/>
</dbReference>
<dbReference type="RefSeq" id="WP_012601702.1">
    <property type="nucleotide sequence ID" value="NC_011745.1"/>
</dbReference>
<dbReference type="SMR" id="B7MZB8"/>
<dbReference type="CAZy" id="GH23">
    <property type="family name" value="Glycoside Hydrolase Family 23"/>
</dbReference>
<dbReference type="KEGG" id="ecq:ECED1_3426"/>
<dbReference type="HOGENOM" id="CLU_044583_0_0_6"/>
<dbReference type="Proteomes" id="UP000000748">
    <property type="component" value="Chromosome"/>
</dbReference>
<dbReference type="GO" id="GO:0009279">
    <property type="term" value="C:cell outer membrane"/>
    <property type="evidence" value="ECO:0007669"/>
    <property type="project" value="UniProtKB-SubCell"/>
</dbReference>
<dbReference type="GO" id="GO:0016798">
    <property type="term" value="F:hydrolase activity, acting on glycosyl bonds"/>
    <property type="evidence" value="ECO:0007669"/>
    <property type="project" value="InterPro"/>
</dbReference>
<dbReference type="GO" id="GO:0008933">
    <property type="term" value="F:peptidoglycan lytic transglycosylase activity"/>
    <property type="evidence" value="ECO:0007669"/>
    <property type="project" value="UniProtKB-UniRule"/>
</dbReference>
<dbReference type="GO" id="GO:0016998">
    <property type="term" value="P:cell wall macromolecule catabolic process"/>
    <property type="evidence" value="ECO:0007669"/>
    <property type="project" value="UniProtKB-UniRule"/>
</dbReference>
<dbReference type="GO" id="GO:0071555">
    <property type="term" value="P:cell wall organization"/>
    <property type="evidence" value="ECO:0007669"/>
    <property type="project" value="UniProtKB-KW"/>
</dbReference>
<dbReference type="GO" id="GO:0000270">
    <property type="term" value="P:peptidoglycan metabolic process"/>
    <property type="evidence" value="ECO:0007669"/>
    <property type="project" value="InterPro"/>
</dbReference>
<dbReference type="CDD" id="cd16893">
    <property type="entry name" value="LT_MltC_MltE"/>
    <property type="match status" value="1"/>
</dbReference>
<dbReference type="FunFam" id="1.10.530.10:FF:000002">
    <property type="entry name" value="Membrane-bound lytic murein transglycosylase C"/>
    <property type="match status" value="1"/>
</dbReference>
<dbReference type="Gene3D" id="1.10.530.10">
    <property type="match status" value="1"/>
</dbReference>
<dbReference type="HAMAP" id="MF_01616">
    <property type="entry name" value="MltC"/>
    <property type="match status" value="1"/>
</dbReference>
<dbReference type="InterPro" id="IPR023346">
    <property type="entry name" value="Lysozyme-like_dom_sf"/>
</dbReference>
<dbReference type="InterPro" id="IPR023664">
    <property type="entry name" value="Murein_transglycosylaseC"/>
</dbReference>
<dbReference type="InterPro" id="IPR024570">
    <property type="entry name" value="Murein_transglycosylaseC_N"/>
</dbReference>
<dbReference type="InterPro" id="IPR000189">
    <property type="entry name" value="Transglyc_AS"/>
</dbReference>
<dbReference type="InterPro" id="IPR008258">
    <property type="entry name" value="Transglycosylase_SLT_dom_1"/>
</dbReference>
<dbReference type="NCBIfam" id="NF008670">
    <property type="entry name" value="PRK11671.1"/>
    <property type="match status" value="1"/>
</dbReference>
<dbReference type="PANTHER" id="PTHR37423:SF2">
    <property type="entry name" value="MEMBRANE-BOUND LYTIC MUREIN TRANSGLYCOSYLASE C"/>
    <property type="match status" value="1"/>
</dbReference>
<dbReference type="PANTHER" id="PTHR37423">
    <property type="entry name" value="SOLUBLE LYTIC MUREIN TRANSGLYCOSYLASE-RELATED"/>
    <property type="match status" value="1"/>
</dbReference>
<dbReference type="Pfam" id="PF11873">
    <property type="entry name" value="Mltc_N"/>
    <property type="match status" value="1"/>
</dbReference>
<dbReference type="Pfam" id="PF01464">
    <property type="entry name" value="SLT"/>
    <property type="match status" value="1"/>
</dbReference>
<dbReference type="SUPFAM" id="SSF53955">
    <property type="entry name" value="Lysozyme-like"/>
    <property type="match status" value="1"/>
</dbReference>
<dbReference type="PROSITE" id="PS51257">
    <property type="entry name" value="PROKAR_LIPOPROTEIN"/>
    <property type="match status" value="1"/>
</dbReference>
<dbReference type="PROSITE" id="PS00922">
    <property type="entry name" value="TRANSGLYCOSYLASE"/>
    <property type="match status" value="1"/>
</dbReference>
<accession>B7MZB8</accession>
<comment type="function">
    <text evidence="1">Murein-degrading enzyme. May play a role in recycling of muropeptides during cell elongation and/or cell division.</text>
</comment>
<comment type="catalytic activity">
    <reaction evidence="1">
        <text>Exolytic cleavage of the (1-&gt;4)-beta-glycosidic linkage between N-acetylmuramic acid (MurNAc) and N-acetylglucosamine (GlcNAc) residues in peptidoglycan, from either the reducing or the non-reducing ends of the peptidoglycan chains, with concomitant formation of a 1,6-anhydrobond in the MurNAc residue.</text>
        <dbReference type="EC" id="4.2.2.n1"/>
    </reaction>
</comment>
<comment type="subcellular location">
    <subcellularLocation>
        <location evidence="1">Cell outer membrane</location>
        <topology evidence="1">Lipid-anchor</topology>
    </subcellularLocation>
</comment>
<comment type="similarity">
    <text evidence="1">Belongs to the transglycosylase Slt family.</text>
</comment>
<proteinExistence type="inferred from homology"/>
<protein>
    <recommendedName>
        <fullName evidence="1">Membrane-bound lytic murein transglycosylase C</fullName>
        <ecNumber evidence="1">4.2.2.n1</ecNumber>
    </recommendedName>
    <alternativeName>
        <fullName evidence="1">Murein lyase C</fullName>
    </alternativeName>
</protein>
<evidence type="ECO:0000255" key="1">
    <source>
        <dbReference type="HAMAP-Rule" id="MF_01616"/>
    </source>
</evidence>
<gene>
    <name evidence="1" type="primary">mltC</name>
    <name type="ordered locus">ECED1_3426</name>
</gene>
<sequence>MKKYLALALIAPLLISCSTTKKGDTYNEAWVKDTNGFDILMGQFAHNIENIWGFKEVVIAGPKDYVKYTDQYQTRSHINFDDGTITIETIAGTEPAAHLRRAIIKTLLMGDDPSSVDLYSDVDDITISKEPFLYGQVVDNTGQPIRWEGRASNFADYLLKNRLKSRSNGMRIIYSVTINMVPNHLDKRAHKYLGMVRQASRKYGVDESLILAIMQTESSFNPYAVSRSDALGLMQVVQHTAGKDVFRSQGKSGTPSRSFLFDPASNIDTGTAYLAMLNNVYLGGIDNPTSRRYAVITAYNGGAGSVLRVFSNDKIQAANIINTMTPGDVYQTLTTRHPSAESRRYLYKVNTAQKSYRRR</sequence>
<feature type="signal peptide" evidence="1">
    <location>
        <begin position="1"/>
        <end position="16"/>
    </location>
</feature>
<feature type="chain" id="PRO_1000185922" description="Membrane-bound lytic murein transglycosylase C">
    <location>
        <begin position="17"/>
        <end position="359"/>
    </location>
</feature>
<feature type="lipid moiety-binding region" description="N-palmitoyl cysteine" evidence="1">
    <location>
        <position position="17"/>
    </location>
</feature>
<feature type="lipid moiety-binding region" description="S-diacylglycerol cysteine" evidence="1">
    <location>
        <position position="17"/>
    </location>
</feature>